<name>RPOZ_SHELP</name>
<reference key="1">
    <citation type="submission" date="2007-03" db="EMBL/GenBank/DDBJ databases">
        <title>Complete sequence of Shewanella loihica PV-4.</title>
        <authorList>
            <consortium name="US DOE Joint Genome Institute"/>
            <person name="Copeland A."/>
            <person name="Lucas S."/>
            <person name="Lapidus A."/>
            <person name="Barry K."/>
            <person name="Detter J.C."/>
            <person name="Glavina del Rio T."/>
            <person name="Hammon N."/>
            <person name="Israni S."/>
            <person name="Dalin E."/>
            <person name="Tice H."/>
            <person name="Pitluck S."/>
            <person name="Chain P."/>
            <person name="Malfatti S."/>
            <person name="Shin M."/>
            <person name="Vergez L."/>
            <person name="Schmutz J."/>
            <person name="Larimer F."/>
            <person name="Land M."/>
            <person name="Hauser L."/>
            <person name="Kyrpides N."/>
            <person name="Mikhailova N."/>
            <person name="Romine M.F."/>
            <person name="Serres G."/>
            <person name="Fredrickson J."/>
            <person name="Tiedje J."/>
            <person name="Richardson P."/>
        </authorList>
    </citation>
    <scope>NUCLEOTIDE SEQUENCE [LARGE SCALE GENOMIC DNA]</scope>
    <source>
        <strain>ATCC BAA-1088 / PV-4</strain>
    </source>
</reference>
<proteinExistence type="inferred from homology"/>
<dbReference type="EC" id="2.7.7.6" evidence="1"/>
<dbReference type="EMBL" id="CP000606">
    <property type="protein sequence ID" value="ABO25364.1"/>
    <property type="molecule type" value="Genomic_DNA"/>
</dbReference>
<dbReference type="RefSeq" id="WP_011867293.1">
    <property type="nucleotide sequence ID" value="NC_009092.1"/>
</dbReference>
<dbReference type="SMR" id="A3QIR6"/>
<dbReference type="STRING" id="323850.Shew_3498"/>
<dbReference type="KEGG" id="slo:Shew_3498"/>
<dbReference type="eggNOG" id="COG1758">
    <property type="taxonomic scope" value="Bacteria"/>
</dbReference>
<dbReference type="HOGENOM" id="CLU_125406_5_3_6"/>
<dbReference type="OrthoDB" id="9796300at2"/>
<dbReference type="Proteomes" id="UP000001558">
    <property type="component" value="Chromosome"/>
</dbReference>
<dbReference type="GO" id="GO:0000428">
    <property type="term" value="C:DNA-directed RNA polymerase complex"/>
    <property type="evidence" value="ECO:0007669"/>
    <property type="project" value="UniProtKB-KW"/>
</dbReference>
<dbReference type="GO" id="GO:0003677">
    <property type="term" value="F:DNA binding"/>
    <property type="evidence" value="ECO:0007669"/>
    <property type="project" value="UniProtKB-UniRule"/>
</dbReference>
<dbReference type="GO" id="GO:0003899">
    <property type="term" value="F:DNA-directed RNA polymerase activity"/>
    <property type="evidence" value="ECO:0007669"/>
    <property type="project" value="UniProtKB-UniRule"/>
</dbReference>
<dbReference type="GO" id="GO:0006351">
    <property type="term" value="P:DNA-templated transcription"/>
    <property type="evidence" value="ECO:0007669"/>
    <property type="project" value="UniProtKB-UniRule"/>
</dbReference>
<dbReference type="Gene3D" id="3.90.940.10">
    <property type="match status" value="1"/>
</dbReference>
<dbReference type="HAMAP" id="MF_00366">
    <property type="entry name" value="RNApol_bact_RpoZ"/>
    <property type="match status" value="1"/>
</dbReference>
<dbReference type="InterPro" id="IPR003716">
    <property type="entry name" value="DNA-dir_RNA_pol_omega"/>
</dbReference>
<dbReference type="InterPro" id="IPR006110">
    <property type="entry name" value="Pol_omega/Rpo6/RPB6"/>
</dbReference>
<dbReference type="InterPro" id="IPR036161">
    <property type="entry name" value="RPB6/omega-like_sf"/>
</dbReference>
<dbReference type="NCBIfam" id="TIGR00690">
    <property type="entry name" value="rpoZ"/>
    <property type="match status" value="1"/>
</dbReference>
<dbReference type="PANTHER" id="PTHR34476">
    <property type="entry name" value="DNA-DIRECTED RNA POLYMERASE SUBUNIT OMEGA"/>
    <property type="match status" value="1"/>
</dbReference>
<dbReference type="PANTHER" id="PTHR34476:SF1">
    <property type="entry name" value="DNA-DIRECTED RNA POLYMERASE SUBUNIT OMEGA"/>
    <property type="match status" value="1"/>
</dbReference>
<dbReference type="Pfam" id="PF01192">
    <property type="entry name" value="RNA_pol_Rpb6"/>
    <property type="match status" value="1"/>
</dbReference>
<dbReference type="SMART" id="SM01409">
    <property type="entry name" value="RNA_pol_Rpb6"/>
    <property type="match status" value="1"/>
</dbReference>
<dbReference type="SUPFAM" id="SSF63562">
    <property type="entry name" value="RPB6/omega subunit-like"/>
    <property type="match status" value="1"/>
</dbReference>
<sequence>MARVTVEDAVNQIGNRFDMILVAARRARQIAVQGKDPMVEEENDKPTVIALREIELGLVTADTLDADERQTVREREAAEIAAVAAIAEGRNTI</sequence>
<feature type="chain" id="PRO_1000006011" description="DNA-directed RNA polymerase subunit omega">
    <location>
        <begin position="1"/>
        <end position="93"/>
    </location>
</feature>
<evidence type="ECO:0000255" key="1">
    <source>
        <dbReference type="HAMAP-Rule" id="MF_00366"/>
    </source>
</evidence>
<protein>
    <recommendedName>
        <fullName evidence="1">DNA-directed RNA polymerase subunit omega</fullName>
        <shortName evidence="1">RNAP omega subunit</shortName>
        <ecNumber evidence="1">2.7.7.6</ecNumber>
    </recommendedName>
    <alternativeName>
        <fullName evidence="1">RNA polymerase omega subunit</fullName>
    </alternativeName>
    <alternativeName>
        <fullName evidence="1">Transcriptase subunit omega</fullName>
    </alternativeName>
</protein>
<keyword id="KW-0240">DNA-directed RNA polymerase</keyword>
<keyword id="KW-0548">Nucleotidyltransferase</keyword>
<keyword id="KW-1185">Reference proteome</keyword>
<keyword id="KW-0804">Transcription</keyword>
<keyword id="KW-0808">Transferase</keyword>
<organism>
    <name type="scientific">Shewanella loihica (strain ATCC BAA-1088 / PV-4)</name>
    <dbReference type="NCBI Taxonomy" id="323850"/>
    <lineage>
        <taxon>Bacteria</taxon>
        <taxon>Pseudomonadati</taxon>
        <taxon>Pseudomonadota</taxon>
        <taxon>Gammaproteobacteria</taxon>
        <taxon>Alteromonadales</taxon>
        <taxon>Shewanellaceae</taxon>
        <taxon>Shewanella</taxon>
    </lineage>
</organism>
<comment type="function">
    <text evidence="1">Promotes RNA polymerase assembly. Latches the N- and C-terminal regions of the beta' subunit thereby facilitating its interaction with the beta and alpha subunits.</text>
</comment>
<comment type="catalytic activity">
    <reaction evidence="1">
        <text>RNA(n) + a ribonucleoside 5'-triphosphate = RNA(n+1) + diphosphate</text>
        <dbReference type="Rhea" id="RHEA:21248"/>
        <dbReference type="Rhea" id="RHEA-COMP:14527"/>
        <dbReference type="Rhea" id="RHEA-COMP:17342"/>
        <dbReference type="ChEBI" id="CHEBI:33019"/>
        <dbReference type="ChEBI" id="CHEBI:61557"/>
        <dbReference type="ChEBI" id="CHEBI:140395"/>
        <dbReference type="EC" id="2.7.7.6"/>
    </reaction>
</comment>
<comment type="subunit">
    <text evidence="1">The RNAP catalytic core consists of 2 alpha, 1 beta, 1 beta' and 1 omega subunit. When a sigma factor is associated with the core the holoenzyme is formed, which can initiate transcription.</text>
</comment>
<comment type="similarity">
    <text evidence="1">Belongs to the RNA polymerase subunit omega family.</text>
</comment>
<gene>
    <name evidence="1" type="primary">rpoZ</name>
    <name type="ordered locus">Shew_3498</name>
</gene>
<accession>A3QIR6</accession>